<feature type="chain" id="PRO_0000195615" description="Tryptophanase">
    <location>
        <begin position="1"/>
        <end position="472"/>
    </location>
</feature>
<feature type="modified residue" description="N6-(pyridoxal phosphate)lysine" evidence="1">
    <location>
        <position position="270"/>
    </location>
</feature>
<organism>
    <name type="scientific">Haemophilus influenzae</name>
    <dbReference type="NCBI Taxonomy" id="727"/>
    <lineage>
        <taxon>Bacteria</taxon>
        <taxon>Pseudomonadati</taxon>
        <taxon>Pseudomonadota</taxon>
        <taxon>Gammaproteobacteria</taxon>
        <taxon>Pasteurellales</taxon>
        <taxon>Pasteurellaceae</taxon>
        <taxon>Haemophilus</taxon>
    </lineage>
</organism>
<keyword id="KW-0456">Lyase</keyword>
<keyword id="KW-0663">Pyridoxal phosphate</keyword>
<keyword id="KW-0823">Tryptophan catabolism</keyword>
<sequence>MENFKHLPEPFRIRVIEPVKRTTREYREQAILKSGMNPFLLDSEDIFIDLLTDSGTGAVTQDMQAAMLRGDEAYSGSRSYYALAKAVKDIFGYEYTIPTHQGRGAEQIYIPVLIAKREREKGLDRSKMVVFSNYFFDTTQGHSQINGATVRNVYIKEAFDTTAKHPFKGNFDLEKLEKGIQEAGAHNVPYIVCTITCNSAGGQPVSIANLKGMYEIARKYDIPVIMDSARFAENAYFVQQREEAYKDWTIEQITYESYRYADGLAMSAKKDAMVPMGGILAFKDKSMEEVYHECRTLCVVQEGFPTYGGLEGGAMERLAVGLHDGMRQEWLAYRIAQIEYLVAGLEKIGVLCQQPGGHAAFVDAGKLLPHIPADQFPAQALSCELYKVAGIRAVEIGSFLLGRDPKTGKQLPCPAELLRLTVPRATYTQTHMDFIIEAFQKVKENAENIKGLTFTYEPKVLRHFTARLKEVE</sequence>
<comment type="catalytic activity">
    <reaction>
        <text>L-tryptophan + H2O = indole + pyruvate + NH4(+)</text>
        <dbReference type="Rhea" id="RHEA:19553"/>
        <dbReference type="ChEBI" id="CHEBI:15361"/>
        <dbReference type="ChEBI" id="CHEBI:15377"/>
        <dbReference type="ChEBI" id="CHEBI:16881"/>
        <dbReference type="ChEBI" id="CHEBI:28938"/>
        <dbReference type="ChEBI" id="CHEBI:57912"/>
        <dbReference type="EC" id="4.1.99.1"/>
    </reaction>
</comment>
<comment type="cofactor">
    <cofactor evidence="1">
        <name>pyridoxal 5'-phosphate</name>
        <dbReference type="ChEBI" id="CHEBI:597326"/>
    </cofactor>
</comment>
<comment type="pathway">
    <text>Amino-acid degradation; L-tryptophan degradation via pyruvate pathway; indole and pyruvate from L-tryptophan: step 1/1.</text>
</comment>
<comment type="subunit">
    <text evidence="1">Homotetramer.</text>
</comment>
<comment type="miscellaneous">
    <text>Some pathogenic strains of H.influenzae are active in tryptophan catabolism and contains tna genes which appear to have been inserted as a mobile unit.</text>
</comment>
<comment type="similarity">
    <text evidence="2">Belongs to the beta-eliminating lyase family.</text>
</comment>
<proteinExistence type="inferred from homology"/>
<accession>O07674</accession>
<evidence type="ECO:0000250" key="1"/>
<evidence type="ECO:0000305" key="2"/>
<reference key="1">
    <citation type="journal article" date="1998" name="J. Bacteriol.">
        <title>The tryptophanase gene cluster of Haemophilus influenzae type b: evidence for horizontal gene transfer.</title>
        <authorList>
            <person name="Martin K."/>
            <person name="Morlin G."/>
            <person name="Smith A."/>
            <person name="Nordyke A."/>
            <person name="Eisenstark A."/>
            <person name="Golomb M."/>
        </authorList>
    </citation>
    <scope>NUCLEOTIDE SEQUENCE [GENOMIC DNA]</scope>
    <source>
        <strain>Eagan / Serotype B</strain>
    </source>
</reference>
<name>TNAA_HAEIF</name>
<gene>
    <name type="primary">tnaA</name>
</gene>
<protein>
    <recommendedName>
        <fullName>Tryptophanase</fullName>
        <ecNumber>4.1.99.1</ecNumber>
    </recommendedName>
    <alternativeName>
        <fullName>L-tryptophan indole-lyase</fullName>
        <shortName>TNase</shortName>
    </alternativeName>
</protein>
<dbReference type="EC" id="4.1.99.1"/>
<dbReference type="EMBL" id="AF003252">
    <property type="protein sequence ID" value="AAB96579.1"/>
    <property type="molecule type" value="Genomic_DNA"/>
</dbReference>
<dbReference type="RefSeq" id="WP_005658448.1">
    <property type="nucleotide sequence ID" value="NZ_WSZG01000007.1"/>
</dbReference>
<dbReference type="SMR" id="O07674"/>
<dbReference type="UniPathway" id="UPA00332">
    <property type="reaction ID" value="UER00452"/>
</dbReference>
<dbReference type="GO" id="GO:0009034">
    <property type="term" value="F:tryptophanase activity"/>
    <property type="evidence" value="ECO:0007669"/>
    <property type="project" value="UniProtKB-UniRule"/>
</dbReference>
<dbReference type="Gene3D" id="3.90.1150.10">
    <property type="entry name" value="Aspartate Aminotransferase, domain 1"/>
    <property type="match status" value="1"/>
</dbReference>
<dbReference type="Gene3D" id="3.40.640.10">
    <property type="entry name" value="Type I PLP-dependent aspartate aminotransferase-like (Major domain)"/>
    <property type="match status" value="1"/>
</dbReference>
<dbReference type="HAMAP" id="MF_00544">
    <property type="entry name" value="Tryptophanase"/>
    <property type="match status" value="1"/>
</dbReference>
<dbReference type="InterPro" id="IPR001597">
    <property type="entry name" value="ArAA_b-elim_lyase/Thr_aldolase"/>
</dbReference>
<dbReference type="InterPro" id="IPR011166">
    <property type="entry name" value="Beta-eliminating_lyase"/>
</dbReference>
<dbReference type="InterPro" id="IPR015424">
    <property type="entry name" value="PyrdxlP-dep_Trfase"/>
</dbReference>
<dbReference type="InterPro" id="IPR015421">
    <property type="entry name" value="PyrdxlP-dep_Trfase_major"/>
</dbReference>
<dbReference type="InterPro" id="IPR015422">
    <property type="entry name" value="PyrdxlP-dep_Trfase_small"/>
</dbReference>
<dbReference type="InterPro" id="IPR013440">
    <property type="entry name" value="TNase"/>
</dbReference>
<dbReference type="InterPro" id="IPR018176">
    <property type="entry name" value="Tryptophanase_CS"/>
</dbReference>
<dbReference type="NCBIfam" id="NF009709">
    <property type="entry name" value="PRK13238.1"/>
    <property type="match status" value="1"/>
</dbReference>
<dbReference type="NCBIfam" id="TIGR02617">
    <property type="entry name" value="tnaA_trp_ase"/>
    <property type="match status" value="1"/>
</dbReference>
<dbReference type="PANTHER" id="PTHR32325">
    <property type="entry name" value="BETA-ELIMINATING LYASE-LIKE PROTEIN-RELATED"/>
    <property type="match status" value="1"/>
</dbReference>
<dbReference type="PANTHER" id="PTHR32325:SF4">
    <property type="entry name" value="TRYPTOPHANASE"/>
    <property type="match status" value="1"/>
</dbReference>
<dbReference type="Pfam" id="PF01212">
    <property type="entry name" value="Beta_elim_lyase"/>
    <property type="match status" value="1"/>
</dbReference>
<dbReference type="PIRSF" id="PIRSF001386">
    <property type="entry name" value="Trpase"/>
    <property type="match status" value="1"/>
</dbReference>
<dbReference type="SUPFAM" id="SSF53383">
    <property type="entry name" value="PLP-dependent transferases"/>
    <property type="match status" value="1"/>
</dbReference>
<dbReference type="PROSITE" id="PS00853">
    <property type="entry name" value="BETA_ELIM_LYASE"/>
    <property type="match status" value="1"/>
</dbReference>